<reference key="1">
    <citation type="journal article" date="1989" name="Virology">
        <title>Evolutionary pathways of the PA genes of influenza A viruses.</title>
        <authorList>
            <person name="Okazaki K."/>
            <person name="Kawaoka Y."/>
            <person name="Webster R.G."/>
        </authorList>
    </citation>
    <scope>NUCLEOTIDE SEQUENCE [GENOMIC RNA]</scope>
</reference>
<organism>
    <name type="scientific">Influenza A virus (strain A/Equine/London/1416/1973 H7N7)</name>
    <dbReference type="NCBI Taxonomy" id="380340"/>
    <lineage>
        <taxon>Viruses</taxon>
        <taxon>Riboviria</taxon>
        <taxon>Orthornavirae</taxon>
        <taxon>Negarnaviricota</taxon>
        <taxon>Polyploviricotina</taxon>
        <taxon>Insthoviricetes</taxon>
        <taxon>Articulavirales</taxon>
        <taxon>Orthomyxoviridae</taxon>
        <taxon>Alphainfluenzavirus</taxon>
        <taxon>Alphainfluenzavirus influenzae</taxon>
        <taxon>Influenza A virus</taxon>
    </lineage>
</organism>
<gene>
    <name type="primary">PA</name>
</gene>
<sequence>MEDFVRQCFNPMIVELAEKAMKEYGEDPKIETNKFAAICTHLEVCFMYSDFHFINELGESVIIESGDPNALLKHRFEIIEGRDRTMAWTVVNSICNTTRAEKPKFLPDLYDYKENRFVEIGVTRREVHIYYLEKANKIKSEKTHIHIFSFTGEEMATKADYTLDEESRARIKTRLFTIRQEMASRGLWDSFVSPREAKRQLKKDLKSQGQCAGLPITVSHRTSPALKILEPMWMDSNRTAALRASFLKCQKK</sequence>
<accession>P0CK86</accession>
<proteinExistence type="inferred from homology"/>
<name>PAX_I73A4</name>
<keyword id="KW-1132">Decay of host mRNAs by virus</keyword>
<keyword id="KW-1262">Eukaryotic host gene expression shutoff by virus</keyword>
<keyword id="KW-1035">Host cytoplasm</keyword>
<keyword id="KW-1190">Host gene expression shutoff by virus</keyword>
<keyword id="KW-1192">Host mRNA suppression by virus</keyword>
<keyword id="KW-1048">Host nucleus</keyword>
<keyword id="KW-0945">Host-virus interaction</keyword>
<keyword id="KW-0688">Ribosomal frameshifting</keyword>
<evidence type="ECO:0000250" key="1">
    <source>
        <dbReference type="UniProtKB" id="P0CK64"/>
    </source>
</evidence>
<evidence type="ECO:0000250" key="2">
    <source>
        <dbReference type="UniProtKB" id="P0CK68"/>
    </source>
</evidence>
<evidence type="ECO:0000250" key="3">
    <source>
        <dbReference type="UniProtKB" id="P0DJW8"/>
    </source>
</evidence>
<evidence type="ECO:0000250" key="4">
    <source>
        <dbReference type="UniProtKB" id="P0DXO5"/>
    </source>
</evidence>
<evidence type="ECO:0000305" key="5"/>
<dbReference type="EMBL" id="M26087">
    <property type="status" value="NOT_ANNOTATED_CDS"/>
    <property type="molecule type" value="Genomic_RNA"/>
</dbReference>
<dbReference type="SMR" id="P0CK86"/>
<dbReference type="GO" id="GO:0003723">
    <property type="term" value="F:RNA binding"/>
    <property type="evidence" value="ECO:0007669"/>
    <property type="project" value="InterPro"/>
</dbReference>
<dbReference type="GO" id="GO:0039694">
    <property type="term" value="P:viral RNA genome replication"/>
    <property type="evidence" value="ECO:0007669"/>
    <property type="project" value="InterPro"/>
</dbReference>
<dbReference type="GO" id="GO:0075523">
    <property type="term" value="P:viral translational frameshifting"/>
    <property type="evidence" value="ECO:0007669"/>
    <property type="project" value="UniProtKB-KW"/>
</dbReference>
<dbReference type="FunFam" id="3.40.91.90:FF:000001">
    <property type="entry name" value="Polymerase acidic protein"/>
    <property type="match status" value="1"/>
</dbReference>
<dbReference type="Gene3D" id="3.40.91.90">
    <property type="entry name" value="Influenza RNA-dependent RNA polymerase subunit PA, endonuclease domain"/>
    <property type="match status" value="1"/>
</dbReference>
<dbReference type="InterPro" id="IPR001009">
    <property type="entry name" value="PA/PA-X"/>
</dbReference>
<dbReference type="InterPro" id="IPR038372">
    <property type="entry name" value="PA/PA-X_sf"/>
</dbReference>
<dbReference type="Pfam" id="PF00603">
    <property type="entry name" value="Flu_PA"/>
    <property type="match status" value="1"/>
</dbReference>
<protein>
    <recommendedName>
        <fullName>Protein PA-X</fullName>
    </recommendedName>
</protein>
<feature type="chain" id="PRO_0000419369" description="Protein PA-X">
    <location>
        <begin position="1"/>
        <end position="252"/>
    </location>
</feature>
<feature type="active site" evidence="2">
    <location>
        <position position="80"/>
    </location>
</feature>
<feature type="active site" evidence="2">
    <location>
        <position position="108"/>
    </location>
</feature>
<feature type="site" description="Important for efficient shutoff activity and nuclear localization" evidence="4">
    <location>
        <position position="195"/>
    </location>
</feature>
<feature type="site" description="Important for efficient shutoff activity and nuclear localization" evidence="4">
    <location>
        <position position="198"/>
    </location>
</feature>
<feature type="site" description="Important for efficient shutoff activity and nuclear localization" evidence="4">
    <location>
        <position position="199"/>
    </location>
</feature>
<feature type="site" description="Important for efficient shutoff activity" evidence="3">
    <location>
        <position position="202"/>
    </location>
</feature>
<feature type="site" description="Important for efficient shutoff activity" evidence="3">
    <location>
        <position position="203"/>
    </location>
</feature>
<feature type="site" description="Important for efficient shutoff activity" evidence="3">
    <location>
        <position position="206"/>
    </location>
</feature>
<organismHost>
    <name type="scientific">Aves</name>
    <dbReference type="NCBI Taxonomy" id="8782"/>
</organismHost>
<organismHost>
    <name type="scientific">Equus caballus</name>
    <name type="common">Horse</name>
    <dbReference type="NCBI Taxonomy" id="9796"/>
</organismHost>
<organismHost>
    <name type="scientific">Homo sapiens</name>
    <name type="common">Human</name>
    <dbReference type="NCBI Taxonomy" id="9606"/>
</organismHost>
<organismHost>
    <name type="scientific">Phocidae</name>
    <name type="common">true seals</name>
    <dbReference type="NCBI Taxonomy" id="9709"/>
</organismHost>
<comment type="function">
    <text evidence="1 4">Plays a major role in the shutoff of the host protein expression by cleaving mRNAs probably via an endonuclease activity. This host shutoff allows the virus to escape from the host antiviral response (By similarity). Hijacks host RNA splicing machinery to selectively target host RNAs containing introns for destruction. This may explain the preferential degradation of RNAs that have undergone co- or post-transcriptional processing (By similarity).</text>
</comment>
<comment type="subcellular location">
    <subcellularLocation>
        <location evidence="4">Host cytoplasm</location>
    </subcellularLocation>
    <subcellularLocation>
        <location evidence="4">Host nucleus</location>
    </subcellularLocation>
</comment>
<comment type="alternative products">
    <event type="ribosomal frameshifting"/>
    <isoform>
        <id>P0CK86-1</id>
        <name>PA-X</name>
        <sequence type="displayed"/>
    </isoform>
    <isoform>
        <id>P13168-1</id>
        <name>PA</name>
        <sequence type="external"/>
    </isoform>
</comment>
<comment type="domain">
    <text evidence="1 4">The probable endonuclease active site in the N-terminus and the basic amino acid cluster in the C-terminus are important for the shutoff activity. The C-terminus acts as a nuclear localization signal (By similarity). The C-terminus is recruited to host protein complexes involved in nuclear Pol II RNA processing (By similarity).</text>
</comment>
<comment type="similarity">
    <text evidence="5">Belongs to the influenza viruses PA-X family.</text>
</comment>